<comment type="function">
    <text evidence="1">This is one of the proteins that binds to the 5S RNA in the ribosome where it forms part of the central protuberance.</text>
</comment>
<comment type="subunit">
    <text evidence="1">Part of the 50S ribosomal subunit; part of the 5S rRNA/L5/L18/L25 subcomplex. Contacts the 5S rRNA. Binds to the 5S rRNA independently of L5 and L18.</text>
</comment>
<comment type="similarity">
    <text evidence="1">Belongs to the bacterial ribosomal protein bL25 family. CTC subfamily.</text>
</comment>
<feature type="chain" id="PRO_1000142545" description="Large ribosomal subunit protein bL25">
    <location>
        <begin position="1"/>
        <end position="192"/>
    </location>
</feature>
<dbReference type="EMBL" id="AP009380">
    <property type="protein sequence ID" value="BAG32798.1"/>
    <property type="molecule type" value="Genomic_DNA"/>
</dbReference>
<dbReference type="RefSeq" id="WP_005875353.1">
    <property type="nucleotide sequence ID" value="NZ_CP025930.1"/>
</dbReference>
<dbReference type="SMR" id="B2RHF3"/>
<dbReference type="GeneID" id="29255527"/>
<dbReference type="KEGG" id="pgn:PGN_0279"/>
<dbReference type="eggNOG" id="COG1825">
    <property type="taxonomic scope" value="Bacteria"/>
</dbReference>
<dbReference type="HOGENOM" id="CLU_075939_2_1_10"/>
<dbReference type="OrthoDB" id="9786489at2"/>
<dbReference type="BioCyc" id="PGIN431947:G1G2V-306-MONOMER"/>
<dbReference type="Proteomes" id="UP000008842">
    <property type="component" value="Chromosome"/>
</dbReference>
<dbReference type="GO" id="GO:0022625">
    <property type="term" value="C:cytosolic large ribosomal subunit"/>
    <property type="evidence" value="ECO:0007669"/>
    <property type="project" value="TreeGrafter"/>
</dbReference>
<dbReference type="GO" id="GO:0008097">
    <property type="term" value="F:5S rRNA binding"/>
    <property type="evidence" value="ECO:0007669"/>
    <property type="project" value="InterPro"/>
</dbReference>
<dbReference type="GO" id="GO:0003735">
    <property type="term" value="F:structural constituent of ribosome"/>
    <property type="evidence" value="ECO:0007669"/>
    <property type="project" value="InterPro"/>
</dbReference>
<dbReference type="GO" id="GO:0006412">
    <property type="term" value="P:translation"/>
    <property type="evidence" value="ECO:0007669"/>
    <property type="project" value="UniProtKB-UniRule"/>
</dbReference>
<dbReference type="CDD" id="cd00495">
    <property type="entry name" value="Ribosomal_L25_TL5_CTC"/>
    <property type="match status" value="1"/>
</dbReference>
<dbReference type="Gene3D" id="2.170.120.20">
    <property type="entry name" value="Ribosomal protein L25, beta domain"/>
    <property type="match status" value="1"/>
</dbReference>
<dbReference type="Gene3D" id="2.40.240.10">
    <property type="entry name" value="Ribosomal Protein L25, Chain P"/>
    <property type="match status" value="1"/>
</dbReference>
<dbReference type="HAMAP" id="MF_01334">
    <property type="entry name" value="Ribosomal_bL25_CTC"/>
    <property type="match status" value="1"/>
</dbReference>
<dbReference type="InterPro" id="IPR020056">
    <property type="entry name" value="Rbsml_bL25/Gln-tRNA_synth_N"/>
</dbReference>
<dbReference type="InterPro" id="IPR011035">
    <property type="entry name" value="Ribosomal_bL25/Gln-tRNA_synth"/>
</dbReference>
<dbReference type="InterPro" id="IPR020057">
    <property type="entry name" value="Ribosomal_bL25_b-dom"/>
</dbReference>
<dbReference type="InterPro" id="IPR037121">
    <property type="entry name" value="Ribosomal_bL25_C"/>
</dbReference>
<dbReference type="InterPro" id="IPR001021">
    <property type="entry name" value="Ribosomal_bL25_long"/>
</dbReference>
<dbReference type="InterPro" id="IPR029751">
    <property type="entry name" value="Ribosomal_L25_dom"/>
</dbReference>
<dbReference type="InterPro" id="IPR020930">
    <property type="entry name" value="Ribosomal_uL5_bac-type"/>
</dbReference>
<dbReference type="NCBIfam" id="TIGR00731">
    <property type="entry name" value="bL25_bact_ctc"/>
    <property type="match status" value="1"/>
</dbReference>
<dbReference type="NCBIfam" id="NF004132">
    <property type="entry name" value="PRK05618.2-2"/>
    <property type="match status" value="1"/>
</dbReference>
<dbReference type="PANTHER" id="PTHR33284">
    <property type="entry name" value="RIBOSOMAL PROTEIN L25/GLN-TRNA SYNTHETASE, ANTI-CODON-BINDING DOMAIN-CONTAINING PROTEIN"/>
    <property type="match status" value="1"/>
</dbReference>
<dbReference type="PANTHER" id="PTHR33284:SF1">
    <property type="entry name" value="RIBOSOMAL PROTEIN L25_GLN-TRNA SYNTHETASE, ANTI-CODON-BINDING DOMAIN-CONTAINING PROTEIN"/>
    <property type="match status" value="1"/>
</dbReference>
<dbReference type="Pfam" id="PF01386">
    <property type="entry name" value="Ribosomal_L25p"/>
    <property type="match status" value="1"/>
</dbReference>
<dbReference type="Pfam" id="PF14693">
    <property type="entry name" value="Ribosomal_TL5_C"/>
    <property type="match status" value="1"/>
</dbReference>
<dbReference type="SUPFAM" id="SSF50715">
    <property type="entry name" value="Ribosomal protein L25-like"/>
    <property type="match status" value="1"/>
</dbReference>
<gene>
    <name evidence="1" type="primary">rplY</name>
    <name evidence="1" type="synonym">ctc</name>
    <name type="ordered locus">PGN_0279</name>
</gene>
<sequence length="192" mass="20998">MKTFQLTGTPRAEFGKKAAKAIRKEDQIPAVLYGGKGEGVNFIVSQDAVRNLIYSPEIFLVELTVEGSGSYKAILKEIQFHPVTDRIIHIDFLQVTDEKPVVMEVPVVLTGHAEGVKAGGKLSLEMRKLKVKALYSEIPEKLDIDVSDLQLGKTIQVGELHFEGLTLMNAKNAVVCAVKLTRAARGAAVKKQ</sequence>
<keyword id="KW-0687">Ribonucleoprotein</keyword>
<keyword id="KW-0689">Ribosomal protein</keyword>
<keyword id="KW-0694">RNA-binding</keyword>
<keyword id="KW-0699">rRNA-binding</keyword>
<reference key="1">
    <citation type="journal article" date="2008" name="DNA Res.">
        <title>Determination of the genome sequence of Porphyromonas gingivalis strain ATCC 33277 and genomic comparison with strain W83 revealed extensive genome rearrangements in P. gingivalis.</title>
        <authorList>
            <person name="Naito M."/>
            <person name="Hirakawa H."/>
            <person name="Yamashita A."/>
            <person name="Ohara N."/>
            <person name="Shoji M."/>
            <person name="Yukitake H."/>
            <person name="Nakayama K."/>
            <person name="Toh H."/>
            <person name="Yoshimura F."/>
            <person name="Kuhara S."/>
            <person name="Hattori M."/>
            <person name="Hayashi T."/>
            <person name="Nakayama K."/>
        </authorList>
    </citation>
    <scope>NUCLEOTIDE SEQUENCE [LARGE SCALE GENOMIC DNA]</scope>
    <source>
        <strain>ATCC 33277 / DSM 20709 / CIP 103683 / JCM 12257 / NCTC 11834 / 2561</strain>
    </source>
</reference>
<protein>
    <recommendedName>
        <fullName evidence="1">Large ribosomal subunit protein bL25</fullName>
    </recommendedName>
    <alternativeName>
        <fullName evidence="2">50S ribosomal protein L25</fullName>
    </alternativeName>
    <alternativeName>
        <fullName evidence="1">General stress protein CTC</fullName>
    </alternativeName>
</protein>
<evidence type="ECO:0000255" key="1">
    <source>
        <dbReference type="HAMAP-Rule" id="MF_01334"/>
    </source>
</evidence>
<evidence type="ECO:0000305" key="2"/>
<accession>B2RHF3</accession>
<name>RL25_PORG3</name>
<organism>
    <name type="scientific">Porphyromonas gingivalis (strain ATCC 33277 / DSM 20709 / CIP 103683 / JCM 12257 / NCTC 11834 / 2561)</name>
    <dbReference type="NCBI Taxonomy" id="431947"/>
    <lineage>
        <taxon>Bacteria</taxon>
        <taxon>Pseudomonadati</taxon>
        <taxon>Bacteroidota</taxon>
        <taxon>Bacteroidia</taxon>
        <taxon>Bacteroidales</taxon>
        <taxon>Porphyromonadaceae</taxon>
        <taxon>Porphyromonas</taxon>
    </lineage>
</organism>
<proteinExistence type="inferred from homology"/>